<name>MTNB_ZYGRC</name>
<evidence type="ECO:0000255" key="1">
    <source>
        <dbReference type="HAMAP-Rule" id="MF_03116"/>
    </source>
</evidence>
<protein>
    <recommendedName>
        <fullName evidence="1">Methylthioribulose-1-phosphate dehydratase</fullName>
        <shortName evidence="1">MTRu-1-P dehydratase</shortName>
        <ecNumber evidence="1">4.2.1.109</ecNumber>
    </recommendedName>
</protein>
<comment type="function">
    <text evidence="1">Catalyzes the dehydration of methylthioribulose-1-phosphate (MTRu-1-P) into 2,3-diketo-5-methylthiopentyl-1-phosphate (DK-MTP-1-P).</text>
</comment>
<comment type="catalytic activity">
    <reaction evidence="1">
        <text>5-(methylsulfanyl)-D-ribulose 1-phosphate = 5-methylsulfanyl-2,3-dioxopentyl phosphate + H2O</text>
        <dbReference type="Rhea" id="RHEA:15549"/>
        <dbReference type="ChEBI" id="CHEBI:15377"/>
        <dbReference type="ChEBI" id="CHEBI:58548"/>
        <dbReference type="ChEBI" id="CHEBI:58828"/>
        <dbReference type="EC" id="4.2.1.109"/>
    </reaction>
</comment>
<comment type="cofactor">
    <cofactor evidence="1">
        <name>Zn(2+)</name>
        <dbReference type="ChEBI" id="CHEBI:29105"/>
    </cofactor>
    <text evidence="1">Binds 1 zinc ion per subunit.</text>
</comment>
<comment type="pathway">
    <text evidence="1">Amino-acid biosynthesis; L-methionine biosynthesis via salvage pathway; L-methionine from S-methyl-5-thio-alpha-D-ribose 1-phosphate: step 2/6.</text>
</comment>
<comment type="subcellular location">
    <subcellularLocation>
        <location evidence="1">Cytoplasm</location>
    </subcellularLocation>
</comment>
<comment type="similarity">
    <text evidence="1">Belongs to the aldolase class II family. MtnB subfamily.</text>
</comment>
<feature type="chain" id="PRO_0000393857" description="Methylthioribulose-1-phosphate dehydratase">
    <location>
        <begin position="1"/>
        <end position="243"/>
    </location>
</feature>
<feature type="active site" description="Proton donor/acceptor" evidence="1">
    <location>
        <position position="131"/>
    </location>
</feature>
<feature type="binding site" evidence="1">
    <location>
        <position position="90"/>
    </location>
    <ligand>
        <name>substrate</name>
    </ligand>
</feature>
<feature type="binding site" evidence="1">
    <location>
        <position position="108"/>
    </location>
    <ligand>
        <name>Zn(2+)</name>
        <dbReference type="ChEBI" id="CHEBI:29105"/>
    </ligand>
</feature>
<feature type="binding site" evidence="1">
    <location>
        <position position="110"/>
    </location>
    <ligand>
        <name>Zn(2+)</name>
        <dbReference type="ChEBI" id="CHEBI:29105"/>
    </ligand>
</feature>
<feature type="binding site" evidence="1">
    <location>
        <position position="193"/>
    </location>
    <ligand>
        <name>Zn(2+)</name>
        <dbReference type="ChEBI" id="CHEBI:29105"/>
    </ligand>
</feature>
<keyword id="KW-0028">Amino-acid biosynthesis</keyword>
<keyword id="KW-0963">Cytoplasm</keyword>
<keyword id="KW-0456">Lyase</keyword>
<keyword id="KW-0479">Metal-binding</keyword>
<keyword id="KW-0486">Methionine biosynthesis</keyword>
<keyword id="KW-1185">Reference proteome</keyword>
<keyword id="KW-0862">Zinc</keyword>
<proteinExistence type="inferred from homology"/>
<accession>C5E0B9</accession>
<gene>
    <name evidence="1" type="primary">MDE1</name>
    <name type="ordered locus">ZYRO0G11440g</name>
</gene>
<sequence>MPTDADYLIDSQDPRHPANLICTLCKQFFDFNWCTGTGGGISIKHPQTGHLYVAPSGVQKEQMKPHDMFVVDGKSYEYLRIPPGLKPSACTPLFNACYKYKSAGAIVHTHSLNAVTCSLIFGQEFRIRGVEQIKAIPSDRKDPSTGKVLNLNWDDTCVIPIIENRPHEDQLEDPLMETFEKYPHACAVIVRRHGIFVWGPTIEKAKVINEALDYLMELAVKMHQLGIPPDCSVGQESKYISKH</sequence>
<reference key="1">
    <citation type="journal article" date="2009" name="Genome Res.">
        <title>Comparative genomics of protoploid Saccharomycetaceae.</title>
        <authorList>
            <consortium name="The Genolevures Consortium"/>
            <person name="Souciet J.-L."/>
            <person name="Dujon B."/>
            <person name="Gaillardin C."/>
            <person name="Johnston M."/>
            <person name="Baret P.V."/>
            <person name="Cliften P."/>
            <person name="Sherman D.J."/>
            <person name="Weissenbach J."/>
            <person name="Westhof E."/>
            <person name="Wincker P."/>
            <person name="Jubin C."/>
            <person name="Poulain J."/>
            <person name="Barbe V."/>
            <person name="Segurens B."/>
            <person name="Artiguenave F."/>
            <person name="Anthouard V."/>
            <person name="Vacherie B."/>
            <person name="Val M.-E."/>
            <person name="Fulton R.S."/>
            <person name="Minx P."/>
            <person name="Wilson R."/>
            <person name="Durrens P."/>
            <person name="Jean G."/>
            <person name="Marck C."/>
            <person name="Martin T."/>
            <person name="Nikolski M."/>
            <person name="Rolland T."/>
            <person name="Seret M.-L."/>
            <person name="Casaregola S."/>
            <person name="Despons L."/>
            <person name="Fairhead C."/>
            <person name="Fischer G."/>
            <person name="Lafontaine I."/>
            <person name="Leh V."/>
            <person name="Lemaire M."/>
            <person name="de Montigny J."/>
            <person name="Neuveglise C."/>
            <person name="Thierry A."/>
            <person name="Blanc-Lenfle I."/>
            <person name="Bleykasten C."/>
            <person name="Diffels J."/>
            <person name="Fritsch E."/>
            <person name="Frangeul L."/>
            <person name="Goeffon A."/>
            <person name="Jauniaux N."/>
            <person name="Kachouri-Lafond R."/>
            <person name="Payen C."/>
            <person name="Potier S."/>
            <person name="Pribylova L."/>
            <person name="Ozanne C."/>
            <person name="Richard G.-F."/>
            <person name="Sacerdot C."/>
            <person name="Straub M.-L."/>
            <person name="Talla E."/>
        </authorList>
    </citation>
    <scope>NUCLEOTIDE SEQUENCE [LARGE SCALE GENOMIC DNA]</scope>
    <source>
        <strain>ATCC 2623 / CBS 732 / BCRC 21506 / NBRC 1130 / NCYC 568 / NRRL Y-229</strain>
    </source>
</reference>
<dbReference type="EC" id="4.2.1.109" evidence="1"/>
<dbReference type="EMBL" id="CU928179">
    <property type="protein sequence ID" value="CAR29553.1"/>
    <property type="molecule type" value="Genomic_DNA"/>
</dbReference>
<dbReference type="RefSeq" id="XP_002498486.1">
    <property type="nucleotide sequence ID" value="XM_002498441.1"/>
</dbReference>
<dbReference type="SMR" id="C5E0B9"/>
<dbReference type="FunCoup" id="C5E0B9">
    <property type="interactions" value="262"/>
</dbReference>
<dbReference type="STRING" id="559307.C5E0B9"/>
<dbReference type="GeneID" id="8206297"/>
<dbReference type="KEGG" id="zro:ZYRO0G11440g"/>
<dbReference type="HOGENOM" id="CLU_006033_4_0_1"/>
<dbReference type="InParanoid" id="C5E0B9"/>
<dbReference type="UniPathway" id="UPA00904">
    <property type="reaction ID" value="UER00875"/>
</dbReference>
<dbReference type="Proteomes" id="UP000008536">
    <property type="component" value="Chromosome G"/>
</dbReference>
<dbReference type="GO" id="GO:0005737">
    <property type="term" value="C:cytoplasm"/>
    <property type="evidence" value="ECO:0007669"/>
    <property type="project" value="UniProtKB-SubCell"/>
</dbReference>
<dbReference type="GO" id="GO:0046570">
    <property type="term" value="F:methylthioribulose 1-phosphate dehydratase activity"/>
    <property type="evidence" value="ECO:0007669"/>
    <property type="project" value="UniProtKB-UniRule"/>
</dbReference>
<dbReference type="GO" id="GO:0008270">
    <property type="term" value="F:zinc ion binding"/>
    <property type="evidence" value="ECO:0007669"/>
    <property type="project" value="UniProtKB-UniRule"/>
</dbReference>
<dbReference type="GO" id="GO:0019509">
    <property type="term" value="P:L-methionine salvage from methylthioadenosine"/>
    <property type="evidence" value="ECO:0007669"/>
    <property type="project" value="UniProtKB-UniRule"/>
</dbReference>
<dbReference type="FunFam" id="3.40.225.10:FF:000003">
    <property type="entry name" value="Methylthioribulose-1-phosphate dehydratase"/>
    <property type="match status" value="1"/>
</dbReference>
<dbReference type="Gene3D" id="3.40.225.10">
    <property type="entry name" value="Class II aldolase/adducin N-terminal domain"/>
    <property type="match status" value="1"/>
</dbReference>
<dbReference type="HAMAP" id="MF_03116">
    <property type="entry name" value="Salvage_MtnB_euk"/>
    <property type="match status" value="1"/>
</dbReference>
<dbReference type="InterPro" id="IPR001303">
    <property type="entry name" value="Aldolase_II/adducin_N"/>
</dbReference>
<dbReference type="InterPro" id="IPR036409">
    <property type="entry name" value="Aldolase_II/adducin_N_sf"/>
</dbReference>
<dbReference type="InterPro" id="IPR017714">
    <property type="entry name" value="MethylthioRu-1-P_deHdtase_MtnB"/>
</dbReference>
<dbReference type="InterPro" id="IPR027514">
    <property type="entry name" value="Salvage_MtnB_euk"/>
</dbReference>
<dbReference type="NCBIfam" id="TIGR03328">
    <property type="entry name" value="salvage_mtnB"/>
    <property type="match status" value="1"/>
</dbReference>
<dbReference type="PANTHER" id="PTHR10640">
    <property type="entry name" value="METHYLTHIORIBULOSE-1-PHOSPHATE DEHYDRATASE"/>
    <property type="match status" value="1"/>
</dbReference>
<dbReference type="PANTHER" id="PTHR10640:SF7">
    <property type="entry name" value="METHYLTHIORIBULOSE-1-PHOSPHATE DEHYDRATASE"/>
    <property type="match status" value="1"/>
</dbReference>
<dbReference type="Pfam" id="PF00596">
    <property type="entry name" value="Aldolase_II"/>
    <property type="match status" value="1"/>
</dbReference>
<dbReference type="SMART" id="SM01007">
    <property type="entry name" value="Aldolase_II"/>
    <property type="match status" value="1"/>
</dbReference>
<dbReference type="SUPFAM" id="SSF53639">
    <property type="entry name" value="AraD/HMP-PK domain-like"/>
    <property type="match status" value="1"/>
</dbReference>
<organism>
    <name type="scientific">Zygosaccharomyces rouxii (strain ATCC 2623 / CBS 732 / NBRC 1130 / NCYC 568 / NRRL Y-229)</name>
    <dbReference type="NCBI Taxonomy" id="559307"/>
    <lineage>
        <taxon>Eukaryota</taxon>
        <taxon>Fungi</taxon>
        <taxon>Dikarya</taxon>
        <taxon>Ascomycota</taxon>
        <taxon>Saccharomycotina</taxon>
        <taxon>Saccharomycetes</taxon>
        <taxon>Saccharomycetales</taxon>
        <taxon>Saccharomycetaceae</taxon>
        <taxon>Zygosaccharomyces</taxon>
    </lineage>
</organism>